<gene>
    <name evidence="1" type="primary">rpsO</name>
    <name type="ordered locus">MUL_2147</name>
</gene>
<protein>
    <recommendedName>
        <fullName evidence="1">Small ribosomal subunit protein uS15</fullName>
    </recommendedName>
    <alternativeName>
        <fullName evidence="2">30S ribosomal protein S15</fullName>
    </alternativeName>
</protein>
<evidence type="ECO:0000255" key="1">
    <source>
        <dbReference type="HAMAP-Rule" id="MF_01343"/>
    </source>
</evidence>
<evidence type="ECO:0000305" key="2"/>
<keyword id="KW-0687">Ribonucleoprotein</keyword>
<keyword id="KW-0689">Ribosomal protein</keyword>
<keyword id="KW-0694">RNA-binding</keyword>
<keyword id="KW-0699">rRNA-binding</keyword>
<feature type="chain" id="PRO_1000054824" description="Small ribosomal subunit protein uS15">
    <location>
        <begin position="1"/>
        <end position="89"/>
    </location>
</feature>
<reference key="1">
    <citation type="journal article" date="2007" name="Genome Res.">
        <title>Reductive evolution and niche adaptation inferred from the genome of Mycobacterium ulcerans, the causative agent of Buruli ulcer.</title>
        <authorList>
            <person name="Stinear T.P."/>
            <person name="Seemann T."/>
            <person name="Pidot S."/>
            <person name="Frigui W."/>
            <person name="Reysset G."/>
            <person name="Garnier T."/>
            <person name="Meurice G."/>
            <person name="Simon D."/>
            <person name="Bouchier C."/>
            <person name="Ma L."/>
            <person name="Tichit M."/>
            <person name="Porter J.L."/>
            <person name="Ryan J."/>
            <person name="Johnson P.D.R."/>
            <person name="Davies J.K."/>
            <person name="Jenkin G.A."/>
            <person name="Small P.L.C."/>
            <person name="Jones L.M."/>
            <person name="Tekaia F."/>
            <person name="Laval F."/>
            <person name="Daffe M."/>
            <person name="Parkhill J."/>
            <person name="Cole S.T."/>
        </authorList>
    </citation>
    <scope>NUCLEOTIDE SEQUENCE [LARGE SCALE GENOMIC DNA]</scope>
    <source>
        <strain>Agy99</strain>
    </source>
</reference>
<organism>
    <name type="scientific">Mycobacterium ulcerans (strain Agy99)</name>
    <dbReference type="NCBI Taxonomy" id="362242"/>
    <lineage>
        <taxon>Bacteria</taxon>
        <taxon>Bacillati</taxon>
        <taxon>Actinomycetota</taxon>
        <taxon>Actinomycetes</taxon>
        <taxon>Mycobacteriales</taxon>
        <taxon>Mycobacteriaceae</taxon>
        <taxon>Mycobacterium</taxon>
        <taxon>Mycobacterium ulcerans group</taxon>
    </lineage>
</organism>
<dbReference type="EMBL" id="CP000325">
    <property type="protein sequence ID" value="ABL04563.1"/>
    <property type="molecule type" value="Genomic_DNA"/>
</dbReference>
<dbReference type="RefSeq" id="WP_011740180.1">
    <property type="nucleotide sequence ID" value="NC_008611.1"/>
</dbReference>
<dbReference type="SMR" id="A0PQE4"/>
<dbReference type="GeneID" id="93437839"/>
<dbReference type="KEGG" id="mul:MUL_2147"/>
<dbReference type="eggNOG" id="COG0184">
    <property type="taxonomic scope" value="Bacteria"/>
</dbReference>
<dbReference type="HOGENOM" id="CLU_148518_0_0_11"/>
<dbReference type="Proteomes" id="UP000000765">
    <property type="component" value="Chromosome"/>
</dbReference>
<dbReference type="GO" id="GO:0022627">
    <property type="term" value="C:cytosolic small ribosomal subunit"/>
    <property type="evidence" value="ECO:0007669"/>
    <property type="project" value="TreeGrafter"/>
</dbReference>
<dbReference type="GO" id="GO:0019843">
    <property type="term" value="F:rRNA binding"/>
    <property type="evidence" value="ECO:0007669"/>
    <property type="project" value="UniProtKB-UniRule"/>
</dbReference>
<dbReference type="GO" id="GO:0003735">
    <property type="term" value="F:structural constituent of ribosome"/>
    <property type="evidence" value="ECO:0007669"/>
    <property type="project" value="InterPro"/>
</dbReference>
<dbReference type="GO" id="GO:0006412">
    <property type="term" value="P:translation"/>
    <property type="evidence" value="ECO:0007669"/>
    <property type="project" value="UniProtKB-UniRule"/>
</dbReference>
<dbReference type="CDD" id="cd00353">
    <property type="entry name" value="Ribosomal_S15p_S13e"/>
    <property type="match status" value="1"/>
</dbReference>
<dbReference type="FunFam" id="1.10.287.10:FF:000002">
    <property type="entry name" value="30S ribosomal protein S15"/>
    <property type="match status" value="1"/>
</dbReference>
<dbReference type="Gene3D" id="6.10.250.3130">
    <property type="match status" value="1"/>
</dbReference>
<dbReference type="Gene3D" id="1.10.287.10">
    <property type="entry name" value="S15/NS1, RNA-binding"/>
    <property type="match status" value="1"/>
</dbReference>
<dbReference type="HAMAP" id="MF_01343_B">
    <property type="entry name" value="Ribosomal_uS15_B"/>
    <property type="match status" value="1"/>
</dbReference>
<dbReference type="InterPro" id="IPR000589">
    <property type="entry name" value="Ribosomal_uS15"/>
</dbReference>
<dbReference type="InterPro" id="IPR005290">
    <property type="entry name" value="Ribosomal_uS15_bac-type"/>
</dbReference>
<dbReference type="InterPro" id="IPR009068">
    <property type="entry name" value="uS15_NS1_RNA-bd_sf"/>
</dbReference>
<dbReference type="NCBIfam" id="TIGR00952">
    <property type="entry name" value="S15_bact"/>
    <property type="match status" value="1"/>
</dbReference>
<dbReference type="PANTHER" id="PTHR23321">
    <property type="entry name" value="RIBOSOMAL PROTEIN S15, BACTERIAL AND ORGANELLAR"/>
    <property type="match status" value="1"/>
</dbReference>
<dbReference type="PANTHER" id="PTHR23321:SF26">
    <property type="entry name" value="SMALL RIBOSOMAL SUBUNIT PROTEIN US15M"/>
    <property type="match status" value="1"/>
</dbReference>
<dbReference type="Pfam" id="PF00312">
    <property type="entry name" value="Ribosomal_S15"/>
    <property type="match status" value="1"/>
</dbReference>
<dbReference type="SMART" id="SM01387">
    <property type="entry name" value="Ribosomal_S15"/>
    <property type="match status" value="1"/>
</dbReference>
<dbReference type="SUPFAM" id="SSF47060">
    <property type="entry name" value="S15/NS1 RNA-binding domain"/>
    <property type="match status" value="1"/>
</dbReference>
<dbReference type="PROSITE" id="PS00362">
    <property type="entry name" value="RIBOSOMAL_S15"/>
    <property type="match status" value="1"/>
</dbReference>
<sequence>MALTAEQKKEILNSYGLHETDTGSPEAQIALLTKRISDLTEHLKVHKHDHHSRRGLLLLVGRRRRLIKYISQIDVQRYRSLIERLGLRR</sequence>
<proteinExistence type="inferred from homology"/>
<accession>A0PQE4</accession>
<comment type="function">
    <text evidence="1">One of the primary rRNA binding proteins, it binds directly to 16S rRNA where it helps nucleate assembly of the platform of the 30S subunit by binding and bridging several RNA helices of the 16S rRNA.</text>
</comment>
<comment type="function">
    <text evidence="1">Forms an intersubunit bridge (bridge B4) with the 23S rRNA of the 50S subunit in the ribosome.</text>
</comment>
<comment type="subunit">
    <text evidence="1">Part of the 30S ribosomal subunit. Forms a bridge to the 50S subunit in the 70S ribosome, contacting the 23S rRNA.</text>
</comment>
<comment type="similarity">
    <text evidence="1">Belongs to the universal ribosomal protein uS15 family.</text>
</comment>
<name>RS15_MYCUA</name>